<comment type="function">
    <text evidence="1">Probable adapter protein located at the actin cytoskeleton that promotes cell attachment. Necessary for the migratory capacity of epithelial cells. Overexpression enhances cell adhesion to collagen and fibronectin and suppresses anchorage independent growth. May contribute to tumor cell migratory capacity (By similarity).</text>
</comment>
<comment type="subunit">
    <text evidence="2 8">Interacts with alpha-actinins ACTN1 and ACTN4, FLNA and MYH9 (By similarity). Interacts (via LIM zinc-binding domain) with MKRN2 (PubMed:28378844).</text>
</comment>
<comment type="subcellular location">
    <subcellularLocation>
        <location>Cytoplasm</location>
    </subcellularLocation>
    <subcellularLocation>
        <location>Cytoplasm</location>
        <location>Cytoskeleton</location>
    </subcellularLocation>
    <text evidence="1">Localizes at the cytoskeleton. Colocalizes with beta-1 integrin (ITGB1) and alpha-actinin but not with paxillin (PXN) (By similarity).</text>
</comment>
<comment type="alternative products">
    <event type="alternative splicing"/>
    <isoform>
        <id>Q8R1G6-1</id>
        <name>1</name>
        <sequence type="displayed"/>
    </isoform>
    <text>A number of isoforms are produced.</text>
</comment>
<comment type="tissue specificity">
    <text evidence="7">Highly expressed in lung. Expressed at intermediate level in kidney, testis and spleen. Weakly expressed in heart and brain.</text>
</comment>
<comment type="induction">
    <text evidence="7">Regulated by IGF-1.</text>
</comment>
<name>PDLI2_MOUSE</name>
<sequence>MALTVDVAGPAPWGFRISGGRDFHTPIIVTKVTERGKAEAADLRPGDIIVAINGQSAENMLHAEAQSKIRQSASPLRLQLDRSQTASPGQTNGEGSLEVLATRFQGSLRTHRDSQSSQRSACFSPVSLSPRPCSPFSTPPPTSPVALSKEDMIGCSFQSLTHSPGLAAAHHLTYPGHPTSQQAGHSSPSDSAVRVLLHSPGRPSSPRFSSLDLEEDSEVFKMLQENRQGRAAPRQSSSFRLLQEALEAEERGGTPAFVPSSLSSQASLPTSRALATPPKLHTCEKCSVNISNQAVRIQEGRYRHPGCYTCADCGLNLKMRGHFWVGNELYCEKHARQRYSMPGTLNSRA</sequence>
<gene>
    <name type="primary">Pdlim2</name>
</gene>
<organism>
    <name type="scientific">Mus musculus</name>
    <name type="common">Mouse</name>
    <dbReference type="NCBI Taxonomy" id="10090"/>
    <lineage>
        <taxon>Eukaryota</taxon>
        <taxon>Metazoa</taxon>
        <taxon>Chordata</taxon>
        <taxon>Craniata</taxon>
        <taxon>Vertebrata</taxon>
        <taxon>Euteleostomi</taxon>
        <taxon>Mammalia</taxon>
        <taxon>Eutheria</taxon>
        <taxon>Euarchontoglires</taxon>
        <taxon>Glires</taxon>
        <taxon>Rodentia</taxon>
        <taxon>Myomorpha</taxon>
        <taxon>Muroidea</taxon>
        <taxon>Muridae</taxon>
        <taxon>Murinae</taxon>
        <taxon>Mus</taxon>
        <taxon>Mus</taxon>
    </lineage>
</organism>
<feature type="chain" id="PRO_0000075864" description="PDZ and LIM domain protein 2">
    <location>
        <begin position="1"/>
        <end position="349"/>
    </location>
</feature>
<feature type="domain" description="PDZ" evidence="5">
    <location>
        <begin position="1"/>
        <end position="84"/>
    </location>
</feature>
<feature type="domain" description="LIM zinc-binding" evidence="4">
    <location>
        <begin position="281"/>
        <end position="341"/>
    </location>
</feature>
<feature type="region of interest" description="Disordered" evidence="6">
    <location>
        <begin position="74"/>
        <end position="147"/>
    </location>
</feature>
<feature type="region of interest" description="Disordered" evidence="6">
    <location>
        <begin position="169"/>
        <end position="212"/>
    </location>
</feature>
<feature type="compositionally biased region" description="Polar residues" evidence="6">
    <location>
        <begin position="81"/>
        <end position="94"/>
    </location>
</feature>
<feature type="compositionally biased region" description="Polar residues" evidence="6">
    <location>
        <begin position="178"/>
        <end position="190"/>
    </location>
</feature>
<feature type="compositionally biased region" description="Low complexity" evidence="6">
    <location>
        <begin position="199"/>
        <end position="210"/>
    </location>
</feature>
<feature type="modified residue" description="Phosphoserine" evidence="10">
    <location>
        <position position="124"/>
    </location>
</feature>
<feature type="modified residue" description="Phosphoserine" evidence="10">
    <location>
        <position position="127"/>
    </location>
</feature>
<feature type="modified residue" description="Phosphoserine" evidence="10">
    <location>
        <position position="129"/>
    </location>
</feature>
<feature type="modified residue" description="Phosphoserine" evidence="10">
    <location>
        <position position="134"/>
    </location>
</feature>
<feature type="modified residue" description="Phosphoserine" evidence="10">
    <location>
        <position position="137"/>
    </location>
</feature>
<feature type="modified residue" description="Phosphothreonine" evidence="10">
    <location>
        <position position="138"/>
    </location>
</feature>
<feature type="modified residue" description="Phosphothreonine" evidence="10">
    <location>
        <position position="142"/>
    </location>
</feature>
<feature type="modified residue" description="Phosphoserine" evidence="10">
    <location>
        <position position="143"/>
    </location>
</feature>
<feature type="modified residue" description="Phosphoserine" evidence="3">
    <location>
        <position position="163"/>
    </location>
</feature>
<feature type="modified residue" description="Phosphoserine" evidence="9">
    <location>
        <position position="199"/>
    </location>
</feature>
<feature type="modified residue" description="Phosphoserine" evidence="10">
    <location>
        <position position="204"/>
    </location>
</feature>
<feature type="modified residue" description="Phosphoserine" evidence="9">
    <location>
        <position position="205"/>
    </location>
</feature>
<feature type="modified residue" description="Phosphoserine" evidence="10">
    <location>
        <position position="209"/>
    </location>
</feature>
<feature type="modified residue" description="Phosphoserine" evidence="2">
    <location>
        <position position="210"/>
    </location>
</feature>
<feature type="modified residue" description="Phosphoserine" evidence="2">
    <location>
        <position position="263"/>
    </location>
</feature>
<feature type="strand" evidence="11">
    <location>
        <begin position="3"/>
        <end position="7"/>
    </location>
</feature>
<feature type="strand" evidence="11">
    <location>
        <begin position="9"/>
        <end position="11"/>
    </location>
</feature>
<feature type="strand" evidence="11">
    <location>
        <begin position="18"/>
        <end position="20"/>
    </location>
</feature>
<feature type="turn" evidence="11">
    <location>
        <begin position="21"/>
        <end position="24"/>
    </location>
</feature>
<feature type="strand" evidence="11">
    <location>
        <begin position="25"/>
        <end position="28"/>
    </location>
</feature>
<feature type="helix" evidence="11">
    <location>
        <begin position="38"/>
        <end position="41"/>
    </location>
</feature>
<feature type="strand" evidence="11">
    <location>
        <begin position="48"/>
        <end position="52"/>
    </location>
</feature>
<feature type="helix" evidence="11">
    <location>
        <begin position="62"/>
        <end position="70"/>
    </location>
</feature>
<feature type="strand" evidence="11">
    <location>
        <begin position="74"/>
        <end position="81"/>
    </location>
</feature>
<protein>
    <recommendedName>
        <fullName>PDZ and LIM domain protein 2</fullName>
    </recommendedName>
    <alternativeName>
        <fullName>PDZ-LIM protein mystique</fullName>
    </alternativeName>
</protein>
<evidence type="ECO:0000250" key="1"/>
<evidence type="ECO:0000250" key="2">
    <source>
        <dbReference type="UniProtKB" id="Q6AYD6"/>
    </source>
</evidence>
<evidence type="ECO:0000250" key="3">
    <source>
        <dbReference type="UniProtKB" id="Q96JY6"/>
    </source>
</evidence>
<evidence type="ECO:0000255" key="4">
    <source>
        <dbReference type="PROSITE-ProRule" id="PRU00125"/>
    </source>
</evidence>
<evidence type="ECO:0000255" key="5">
    <source>
        <dbReference type="PROSITE-ProRule" id="PRU00143"/>
    </source>
</evidence>
<evidence type="ECO:0000256" key="6">
    <source>
        <dbReference type="SAM" id="MobiDB-lite"/>
    </source>
</evidence>
<evidence type="ECO:0000269" key="7">
    <source>
    </source>
</evidence>
<evidence type="ECO:0000269" key="8">
    <source>
    </source>
</evidence>
<evidence type="ECO:0007744" key="9">
    <source>
    </source>
</evidence>
<evidence type="ECO:0007744" key="10">
    <source>
    </source>
</evidence>
<evidence type="ECO:0007829" key="11">
    <source>
        <dbReference type="PDB" id="1VB7"/>
    </source>
</evidence>
<accession>Q8R1G6</accession>
<dbReference type="EMBL" id="BC024556">
    <property type="protein sequence ID" value="AAH24556.1"/>
    <property type="molecule type" value="mRNA"/>
</dbReference>
<dbReference type="CCDS" id="CCDS27248.1">
    <molecule id="Q8R1G6-1"/>
</dbReference>
<dbReference type="RefSeq" id="NP_001240665.1">
    <molecule id="Q8R1G6-1"/>
    <property type="nucleotide sequence ID" value="NM_001253736.1"/>
</dbReference>
<dbReference type="RefSeq" id="NP_666090.1">
    <molecule id="Q8R1G6-1"/>
    <property type="nucleotide sequence ID" value="NM_145978.2"/>
</dbReference>
<dbReference type="RefSeq" id="XP_011243308.1">
    <property type="nucleotide sequence ID" value="XM_011245006.2"/>
</dbReference>
<dbReference type="RefSeq" id="XP_036014427.1">
    <molecule id="Q8R1G6-1"/>
    <property type="nucleotide sequence ID" value="XM_036158534.1"/>
</dbReference>
<dbReference type="PDB" id="1VB7">
    <property type="method" value="NMR"/>
    <property type="chains" value="A=3-83"/>
</dbReference>
<dbReference type="PDBsum" id="1VB7"/>
<dbReference type="SMR" id="Q8R1G6"/>
<dbReference type="BioGRID" id="229389">
    <property type="interactions" value="3"/>
</dbReference>
<dbReference type="FunCoup" id="Q8R1G6">
    <property type="interactions" value="39"/>
</dbReference>
<dbReference type="IntAct" id="Q8R1G6">
    <property type="interactions" value="1"/>
</dbReference>
<dbReference type="MINT" id="Q8R1G6"/>
<dbReference type="STRING" id="10090.ENSMUSP00000116200"/>
<dbReference type="GlyGen" id="Q8R1G6">
    <property type="glycosylation" value="1 site, 1 O-linked glycan (1 site)"/>
</dbReference>
<dbReference type="iPTMnet" id="Q8R1G6"/>
<dbReference type="PhosphoSitePlus" id="Q8R1G6"/>
<dbReference type="SwissPalm" id="Q8R1G6"/>
<dbReference type="jPOST" id="Q8R1G6"/>
<dbReference type="PaxDb" id="10090-ENSMUSP00000116200"/>
<dbReference type="PeptideAtlas" id="Q8R1G6"/>
<dbReference type="ProteomicsDB" id="288085">
    <molecule id="Q8R1G6-1"/>
</dbReference>
<dbReference type="Pumba" id="Q8R1G6"/>
<dbReference type="Antibodypedia" id="999">
    <property type="antibodies" value="265 antibodies from 26 providers"/>
</dbReference>
<dbReference type="DNASU" id="213019"/>
<dbReference type="Ensembl" id="ENSMUST00000022681.11">
    <molecule id="Q8R1G6-1"/>
    <property type="protein sequence ID" value="ENSMUSP00000022681.5"/>
    <property type="gene ID" value="ENSMUSG00000022090.11"/>
</dbReference>
<dbReference type="Ensembl" id="ENSMUST00000153735.8">
    <molecule id="Q8R1G6-1"/>
    <property type="protein sequence ID" value="ENSMUSP00000116200.2"/>
    <property type="gene ID" value="ENSMUSG00000022090.11"/>
</dbReference>
<dbReference type="GeneID" id="213019"/>
<dbReference type="KEGG" id="mmu:213019"/>
<dbReference type="UCSC" id="uc007uni.1">
    <molecule id="Q8R1G6-1"/>
    <property type="organism name" value="mouse"/>
</dbReference>
<dbReference type="AGR" id="MGI:2384850"/>
<dbReference type="CTD" id="64236"/>
<dbReference type="MGI" id="MGI:2384850">
    <property type="gene designation" value="Pdlim2"/>
</dbReference>
<dbReference type="VEuPathDB" id="HostDB:ENSMUSG00000022090"/>
<dbReference type="eggNOG" id="KOG1703">
    <property type="taxonomic scope" value="Eukaryota"/>
</dbReference>
<dbReference type="GeneTree" id="ENSGT00940000160418"/>
<dbReference type="HOGENOM" id="CLU_038114_1_1_1"/>
<dbReference type="InParanoid" id="Q8R1G6"/>
<dbReference type="OMA" id="MRGHFWF"/>
<dbReference type="OrthoDB" id="445995at2759"/>
<dbReference type="PhylomeDB" id="Q8R1G6"/>
<dbReference type="TreeFam" id="TF106408"/>
<dbReference type="BioGRID-ORCS" id="213019">
    <property type="hits" value="1 hit in 77 CRISPR screens"/>
</dbReference>
<dbReference type="ChiTaRS" id="Pdlim2">
    <property type="organism name" value="mouse"/>
</dbReference>
<dbReference type="EvolutionaryTrace" id="Q8R1G6"/>
<dbReference type="PRO" id="PR:Q8R1G6"/>
<dbReference type="Proteomes" id="UP000000589">
    <property type="component" value="Chromosome 14"/>
</dbReference>
<dbReference type="RNAct" id="Q8R1G6">
    <property type="molecule type" value="protein"/>
</dbReference>
<dbReference type="Bgee" id="ENSMUSG00000022090">
    <property type="expression patterns" value="Expressed in esophagus and 206 other cell types or tissues"/>
</dbReference>
<dbReference type="ExpressionAtlas" id="Q8R1G6">
    <property type="expression patterns" value="baseline and differential"/>
</dbReference>
<dbReference type="GO" id="GO:0005737">
    <property type="term" value="C:cytoplasm"/>
    <property type="evidence" value="ECO:0007669"/>
    <property type="project" value="UniProtKB-SubCell"/>
</dbReference>
<dbReference type="GO" id="GO:0005856">
    <property type="term" value="C:cytoskeleton"/>
    <property type="evidence" value="ECO:0007669"/>
    <property type="project" value="UniProtKB-SubCell"/>
</dbReference>
<dbReference type="GO" id="GO:0046872">
    <property type="term" value="F:metal ion binding"/>
    <property type="evidence" value="ECO:0007669"/>
    <property type="project" value="UniProtKB-KW"/>
</dbReference>
<dbReference type="GO" id="GO:0031625">
    <property type="term" value="F:ubiquitin protein ligase binding"/>
    <property type="evidence" value="ECO:0000353"/>
    <property type="project" value="UniProtKB"/>
</dbReference>
<dbReference type="GO" id="GO:0030163">
    <property type="term" value="P:protein catabolic process"/>
    <property type="evidence" value="ECO:0000315"/>
    <property type="project" value="MGI"/>
</dbReference>
<dbReference type="CDD" id="cd09449">
    <property type="entry name" value="LIM_Mystique"/>
    <property type="match status" value="1"/>
</dbReference>
<dbReference type="CDD" id="cd06753">
    <property type="entry name" value="PDZ_PDLIM-like"/>
    <property type="match status" value="1"/>
</dbReference>
<dbReference type="FunFam" id="2.10.110.10:FF:000085">
    <property type="entry name" value="PDZ and LIM domain 2 (mystique)"/>
    <property type="match status" value="1"/>
</dbReference>
<dbReference type="FunFam" id="2.30.42.10:FF:000130">
    <property type="entry name" value="PDZ and LIM domain 2 (mystique)"/>
    <property type="match status" value="1"/>
</dbReference>
<dbReference type="Gene3D" id="2.30.42.10">
    <property type="match status" value="1"/>
</dbReference>
<dbReference type="Gene3D" id="2.10.110.10">
    <property type="entry name" value="Cysteine Rich Protein"/>
    <property type="match status" value="1"/>
</dbReference>
<dbReference type="InterPro" id="IPR031847">
    <property type="entry name" value="PDLI1-4/Zasp-like_mid"/>
</dbReference>
<dbReference type="InterPro" id="IPR001478">
    <property type="entry name" value="PDZ"/>
</dbReference>
<dbReference type="InterPro" id="IPR050604">
    <property type="entry name" value="PDZ-LIM_domain"/>
</dbReference>
<dbReference type="InterPro" id="IPR036034">
    <property type="entry name" value="PDZ_sf"/>
</dbReference>
<dbReference type="InterPro" id="IPR001781">
    <property type="entry name" value="Znf_LIM"/>
</dbReference>
<dbReference type="PANTHER" id="PTHR24214:SF1">
    <property type="entry name" value="PDZ AND LIM DOMAIN PROTEIN 2"/>
    <property type="match status" value="1"/>
</dbReference>
<dbReference type="PANTHER" id="PTHR24214">
    <property type="entry name" value="PDZ AND LIM DOMAIN PROTEIN ZASP"/>
    <property type="match status" value="1"/>
</dbReference>
<dbReference type="Pfam" id="PF15936">
    <property type="entry name" value="DUF4749"/>
    <property type="match status" value="1"/>
</dbReference>
<dbReference type="Pfam" id="PF00412">
    <property type="entry name" value="LIM"/>
    <property type="match status" value="1"/>
</dbReference>
<dbReference type="Pfam" id="PF00595">
    <property type="entry name" value="PDZ"/>
    <property type="match status" value="1"/>
</dbReference>
<dbReference type="SMART" id="SM00132">
    <property type="entry name" value="LIM"/>
    <property type="match status" value="1"/>
</dbReference>
<dbReference type="SMART" id="SM00228">
    <property type="entry name" value="PDZ"/>
    <property type="match status" value="1"/>
</dbReference>
<dbReference type="SUPFAM" id="SSF57716">
    <property type="entry name" value="Glucocorticoid receptor-like (DNA-binding domain)"/>
    <property type="match status" value="1"/>
</dbReference>
<dbReference type="SUPFAM" id="SSF50156">
    <property type="entry name" value="PDZ domain-like"/>
    <property type="match status" value="1"/>
</dbReference>
<dbReference type="PROSITE" id="PS00478">
    <property type="entry name" value="LIM_DOMAIN_1"/>
    <property type="match status" value="1"/>
</dbReference>
<dbReference type="PROSITE" id="PS50023">
    <property type="entry name" value="LIM_DOMAIN_2"/>
    <property type="match status" value="1"/>
</dbReference>
<dbReference type="PROSITE" id="PS50106">
    <property type="entry name" value="PDZ"/>
    <property type="match status" value="1"/>
</dbReference>
<proteinExistence type="evidence at protein level"/>
<keyword id="KW-0002">3D-structure</keyword>
<keyword id="KW-0025">Alternative splicing</keyword>
<keyword id="KW-0963">Cytoplasm</keyword>
<keyword id="KW-0206">Cytoskeleton</keyword>
<keyword id="KW-0440">LIM domain</keyword>
<keyword id="KW-0479">Metal-binding</keyword>
<keyword id="KW-0597">Phosphoprotein</keyword>
<keyword id="KW-1185">Reference proteome</keyword>
<keyword id="KW-0862">Zinc</keyword>
<reference key="1">
    <citation type="journal article" date="2004" name="Genome Res.">
        <title>The status, quality, and expansion of the NIH full-length cDNA project: the Mammalian Gene Collection (MGC).</title>
        <authorList>
            <consortium name="The MGC Project Team"/>
        </authorList>
    </citation>
    <scope>NUCLEOTIDE SEQUENCE [LARGE SCALE MRNA] (ISOFORM 1)</scope>
    <source>
        <strain>FVB/N</strain>
        <tissue>Colon</tissue>
    </source>
</reference>
<reference key="2">
    <citation type="journal article" date="2005" name="Mol. Biol. Cell">
        <title>Mystique is a new IGF-I regulated PDZ-LIM domain protein that promotes cell attachment and migration and suppresses anchorage independent growth.</title>
        <authorList>
            <person name="Loughran G."/>
            <person name="Healy N."/>
            <person name="Kiely P.A."/>
            <person name="Huigsloot M."/>
            <person name="Kedersha N.L."/>
            <person name="O'connor R."/>
        </authorList>
    </citation>
    <scope>TISSUE SPECIFICITY</scope>
    <scope>INDUCTION</scope>
</reference>
<reference key="3">
    <citation type="journal article" date="2009" name="Mol. Cell. Proteomics">
        <title>Large scale localization of protein phosphorylation by use of electron capture dissociation mass spectrometry.</title>
        <authorList>
            <person name="Sweet S.M."/>
            <person name="Bailey C.M."/>
            <person name="Cunningham D.L."/>
            <person name="Heath J.K."/>
            <person name="Cooper H.J."/>
        </authorList>
    </citation>
    <scope>PHOSPHORYLATION [LARGE SCALE ANALYSIS] AT SER-199 AND SER-205</scope>
    <scope>IDENTIFICATION BY MASS SPECTROMETRY [LARGE SCALE ANALYSIS]</scope>
    <source>
        <tissue>Embryonic fibroblast</tissue>
    </source>
</reference>
<reference key="4">
    <citation type="journal article" date="2010" name="Cell">
        <title>A tissue-specific atlas of mouse protein phosphorylation and expression.</title>
        <authorList>
            <person name="Huttlin E.L."/>
            <person name="Jedrychowski M.P."/>
            <person name="Elias J.E."/>
            <person name="Goswami T."/>
            <person name="Rad R."/>
            <person name="Beausoleil S.A."/>
            <person name="Villen J."/>
            <person name="Haas W."/>
            <person name="Sowa M.E."/>
            <person name="Gygi S.P."/>
        </authorList>
    </citation>
    <scope>PHOSPHORYLATION [LARGE SCALE ANALYSIS] AT SER-124; SER-127; SER-129; SER-134; SER-137; THR-138; THR-142; SER-143; SER-204 AND SER-209</scope>
    <scope>IDENTIFICATION BY MASS SPECTROMETRY [LARGE SCALE ANALYSIS]</scope>
    <source>
        <tissue>Brain</tissue>
        <tissue>Brown adipose tissue</tissue>
        <tissue>Kidney</tissue>
        <tissue>Lung</tissue>
        <tissue>Spleen</tissue>
        <tissue>Testis</tissue>
    </source>
</reference>
<reference key="5">
    <citation type="journal article" date="2017" name="Sci. Rep.">
        <title>MKRN2 is a novel ubiquitin E3 ligase for the p65 subunit of NF-kappaB and negatively regulates inflammatory responses.</title>
        <authorList>
            <person name="Shin C."/>
            <person name="Ito Y."/>
            <person name="Ichikawa S."/>
            <person name="Tokunaga M."/>
            <person name="Sakata-Sogawa K."/>
            <person name="Tanaka T."/>
        </authorList>
    </citation>
    <scope>INTERACTION WITH MKRN2</scope>
</reference>
<reference key="6">
    <citation type="submission" date="2004-02" db="PDB data bank">
        <title>Solution structure of the PDZ domain of PDZ and LIM domain 2.</title>
        <authorList>
            <consortium name="RIKEN structural genomics initiative (RSGI)"/>
        </authorList>
    </citation>
    <scope>STRUCTURE BY NMR OF 3-83</scope>
</reference>